<feature type="chain" id="PRO_0000104257" description="Large ribosomal subunit protein uL11">
    <location>
        <begin position="1"/>
        <end position="142"/>
    </location>
</feature>
<keyword id="KW-0488">Methylation</keyword>
<keyword id="KW-0687">Ribonucleoprotein</keyword>
<keyword id="KW-0689">Ribosomal protein</keyword>
<keyword id="KW-0694">RNA-binding</keyword>
<keyword id="KW-0699">rRNA-binding</keyword>
<organism>
    <name type="scientific">Brucella melitensis biotype 1 (strain ATCC 23456 / CCUG 17765 / NCTC 10094 / 16M)</name>
    <dbReference type="NCBI Taxonomy" id="224914"/>
    <lineage>
        <taxon>Bacteria</taxon>
        <taxon>Pseudomonadati</taxon>
        <taxon>Pseudomonadota</taxon>
        <taxon>Alphaproteobacteria</taxon>
        <taxon>Hyphomicrobiales</taxon>
        <taxon>Brucellaceae</taxon>
        <taxon>Brucella/Ochrobactrum group</taxon>
        <taxon>Brucella</taxon>
    </lineage>
</organism>
<proteinExistence type="inferred from homology"/>
<protein>
    <recommendedName>
        <fullName evidence="1">Large ribosomal subunit protein uL11</fullName>
    </recommendedName>
    <alternativeName>
        <fullName evidence="2">50S ribosomal protein L11</fullName>
    </alternativeName>
</protein>
<dbReference type="EMBL" id="AE008917">
    <property type="protein sequence ID" value="AAL51926.1"/>
    <property type="molecule type" value="Genomic_DNA"/>
</dbReference>
<dbReference type="PIR" id="AC3345">
    <property type="entry name" value="AC3345"/>
</dbReference>
<dbReference type="RefSeq" id="WP_002964374.1">
    <property type="nucleotide sequence ID" value="NZ_GG703780.1"/>
</dbReference>
<dbReference type="SMR" id="Q8YHQ1"/>
<dbReference type="GeneID" id="97533513"/>
<dbReference type="KEGG" id="bme:BMEI0745"/>
<dbReference type="KEGG" id="bmel:DK63_677"/>
<dbReference type="PATRIC" id="fig|224914.52.peg.708"/>
<dbReference type="eggNOG" id="COG0080">
    <property type="taxonomic scope" value="Bacteria"/>
</dbReference>
<dbReference type="PhylomeDB" id="Q8YHQ1"/>
<dbReference type="Proteomes" id="UP000000419">
    <property type="component" value="Chromosome I"/>
</dbReference>
<dbReference type="GO" id="GO:0022625">
    <property type="term" value="C:cytosolic large ribosomal subunit"/>
    <property type="evidence" value="ECO:0007669"/>
    <property type="project" value="TreeGrafter"/>
</dbReference>
<dbReference type="GO" id="GO:0070180">
    <property type="term" value="F:large ribosomal subunit rRNA binding"/>
    <property type="evidence" value="ECO:0007669"/>
    <property type="project" value="UniProtKB-UniRule"/>
</dbReference>
<dbReference type="GO" id="GO:0003735">
    <property type="term" value="F:structural constituent of ribosome"/>
    <property type="evidence" value="ECO:0007669"/>
    <property type="project" value="InterPro"/>
</dbReference>
<dbReference type="GO" id="GO:0006412">
    <property type="term" value="P:translation"/>
    <property type="evidence" value="ECO:0007669"/>
    <property type="project" value="UniProtKB-UniRule"/>
</dbReference>
<dbReference type="CDD" id="cd00349">
    <property type="entry name" value="Ribosomal_L11"/>
    <property type="match status" value="1"/>
</dbReference>
<dbReference type="FunFam" id="1.10.10.250:FF:000001">
    <property type="entry name" value="50S ribosomal protein L11"/>
    <property type="match status" value="1"/>
</dbReference>
<dbReference type="FunFam" id="3.30.1550.10:FF:000001">
    <property type="entry name" value="50S ribosomal protein L11"/>
    <property type="match status" value="1"/>
</dbReference>
<dbReference type="Gene3D" id="1.10.10.250">
    <property type="entry name" value="Ribosomal protein L11, C-terminal domain"/>
    <property type="match status" value="1"/>
</dbReference>
<dbReference type="Gene3D" id="3.30.1550.10">
    <property type="entry name" value="Ribosomal protein L11/L12, N-terminal domain"/>
    <property type="match status" value="1"/>
</dbReference>
<dbReference type="HAMAP" id="MF_00736">
    <property type="entry name" value="Ribosomal_uL11"/>
    <property type="match status" value="1"/>
</dbReference>
<dbReference type="InterPro" id="IPR000911">
    <property type="entry name" value="Ribosomal_uL11"/>
</dbReference>
<dbReference type="InterPro" id="IPR006519">
    <property type="entry name" value="Ribosomal_uL11_bac-typ"/>
</dbReference>
<dbReference type="InterPro" id="IPR020783">
    <property type="entry name" value="Ribosomal_uL11_C"/>
</dbReference>
<dbReference type="InterPro" id="IPR036769">
    <property type="entry name" value="Ribosomal_uL11_C_sf"/>
</dbReference>
<dbReference type="InterPro" id="IPR020785">
    <property type="entry name" value="Ribosomal_uL11_CS"/>
</dbReference>
<dbReference type="InterPro" id="IPR020784">
    <property type="entry name" value="Ribosomal_uL11_N"/>
</dbReference>
<dbReference type="InterPro" id="IPR036796">
    <property type="entry name" value="Ribosomal_uL11_N_sf"/>
</dbReference>
<dbReference type="NCBIfam" id="TIGR01632">
    <property type="entry name" value="L11_bact"/>
    <property type="match status" value="1"/>
</dbReference>
<dbReference type="PANTHER" id="PTHR11661">
    <property type="entry name" value="60S RIBOSOMAL PROTEIN L12"/>
    <property type="match status" value="1"/>
</dbReference>
<dbReference type="PANTHER" id="PTHR11661:SF1">
    <property type="entry name" value="LARGE RIBOSOMAL SUBUNIT PROTEIN UL11M"/>
    <property type="match status" value="1"/>
</dbReference>
<dbReference type="Pfam" id="PF00298">
    <property type="entry name" value="Ribosomal_L11"/>
    <property type="match status" value="1"/>
</dbReference>
<dbReference type="Pfam" id="PF03946">
    <property type="entry name" value="Ribosomal_L11_N"/>
    <property type="match status" value="1"/>
</dbReference>
<dbReference type="SMART" id="SM00649">
    <property type="entry name" value="RL11"/>
    <property type="match status" value="1"/>
</dbReference>
<dbReference type="SUPFAM" id="SSF54747">
    <property type="entry name" value="Ribosomal L11/L12e N-terminal domain"/>
    <property type="match status" value="1"/>
</dbReference>
<dbReference type="SUPFAM" id="SSF46906">
    <property type="entry name" value="Ribosomal protein L11, C-terminal domain"/>
    <property type="match status" value="1"/>
</dbReference>
<dbReference type="PROSITE" id="PS00359">
    <property type="entry name" value="RIBOSOMAL_L11"/>
    <property type="match status" value="1"/>
</dbReference>
<evidence type="ECO:0000255" key="1">
    <source>
        <dbReference type="HAMAP-Rule" id="MF_00736"/>
    </source>
</evidence>
<evidence type="ECO:0000305" key="2"/>
<comment type="function">
    <text evidence="1">Forms part of the ribosomal stalk which helps the ribosome interact with GTP-bound translation factors.</text>
</comment>
<comment type="subunit">
    <text evidence="1">Part of the ribosomal stalk of the 50S ribosomal subunit. Interacts with L10 and the large rRNA to form the base of the stalk. L10 forms an elongated spine to which L12 dimers bind in a sequential fashion forming a multimeric L10(L12)X complex.</text>
</comment>
<comment type="PTM">
    <text evidence="1">One or more lysine residues are methylated.</text>
</comment>
<comment type="similarity">
    <text evidence="1">Belongs to the universal ribosomal protein uL11 family.</text>
</comment>
<reference key="1">
    <citation type="journal article" date="2002" name="Proc. Natl. Acad. Sci. U.S.A.">
        <title>The genome sequence of the facultative intracellular pathogen Brucella melitensis.</title>
        <authorList>
            <person name="DelVecchio V.G."/>
            <person name="Kapatral V."/>
            <person name="Redkar R.J."/>
            <person name="Patra G."/>
            <person name="Mujer C."/>
            <person name="Los T."/>
            <person name="Ivanova N."/>
            <person name="Anderson I."/>
            <person name="Bhattacharyya A."/>
            <person name="Lykidis A."/>
            <person name="Reznik G."/>
            <person name="Jablonski L."/>
            <person name="Larsen N."/>
            <person name="D'Souza M."/>
            <person name="Bernal A."/>
            <person name="Mazur M."/>
            <person name="Goltsman E."/>
            <person name="Selkov E."/>
            <person name="Elzer P.H."/>
            <person name="Hagius S."/>
            <person name="O'Callaghan D."/>
            <person name="Letesson J.-J."/>
            <person name="Haselkorn R."/>
            <person name="Kyrpides N.C."/>
            <person name="Overbeek R."/>
        </authorList>
    </citation>
    <scope>NUCLEOTIDE SEQUENCE [LARGE SCALE GENOMIC DNA]</scope>
    <source>
        <strain>ATCC 23456 / CCUG 17765 / NCTC 10094 / 16M</strain>
    </source>
</reference>
<sequence length="142" mass="15018">MAKKVAGQLKLQVPAGAANPSPPIGPALGQRGINIMEFCKAFNAASQEMEKGSPIPVLITYYQDKSFTFVMKTPPVTYFLKKAANLKSGSKTPGKASAGTITRDKVRAIAEAKMKDLNAADVEAAMRMIEGSARSMGLEVVG</sequence>
<accession>Q8YHQ1</accession>
<gene>
    <name evidence="1" type="primary">rplK</name>
    <name type="ordered locus">BMEI0745</name>
</gene>
<name>RL11_BRUME</name>